<proteinExistence type="evidence at transcript level"/>
<comment type="function">
    <text evidence="5 6">E3 ubiquitin-protein ligase that promotes the ubiquitination and proteasomal degradation of KRP1 and KRP2.</text>
</comment>
<comment type="catalytic activity">
    <reaction>
        <text>S-ubiquitinyl-[E2 ubiquitin-conjugating enzyme]-L-cysteine + [acceptor protein]-L-lysine = [E2 ubiquitin-conjugating enzyme]-L-cysteine + N(6)-ubiquitinyl-[acceptor protein]-L-lysine.</text>
        <dbReference type="EC" id="2.3.2.27"/>
    </reaction>
</comment>
<comment type="subcellular location">
    <subcellularLocation>
        <location evidence="7">Membrane</location>
        <topology evidence="7">Multi-pass membrane protein</topology>
    </subcellularLocation>
</comment>
<comment type="alternative products">
    <event type="alternative splicing"/>
    <isoform>
        <id>Q9SIZ8-1</id>
        <name>1</name>
        <sequence type="displayed"/>
    </isoform>
    <text>A number of isoforms are produced. According to EST sequences.</text>
</comment>
<comment type="induction">
    <text evidence="6">Induced by the beet severe curly top virus (BSCTV) C4 protein and by BSCTV infection.</text>
</comment>
<comment type="disruption phenotype">
    <text evidence="5 6">No defects in growth and development, but reduced susceptibility to beet severe curly top virus infection.</text>
</comment>
<comment type="miscellaneous">
    <text>Favors geminivirus replication by up-regulating the host cell cycle.</text>
</comment>
<comment type="sequence caution" evidence="7">
    <conflict type="erroneous gene model prediction">
        <sequence resource="EMBL-CDS" id="AAD20418"/>
    </conflict>
</comment>
<comment type="sequence caution" evidence="7">
    <conflict type="frameshift">
        <sequence resource="EMBL" id="AK230019"/>
    </conflict>
</comment>
<organism>
    <name type="scientific">Arabidopsis thaliana</name>
    <name type="common">Mouse-ear cress</name>
    <dbReference type="NCBI Taxonomy" id="3702"/>
    <lineage>
        <taxon>Eukaryota</taxon>
        <taxon>Viridiplantae</taxon>
        <taxon>Streptophyta</taxon>
        <taxon>Embryophyta</taxon>
        <taxon>Tracheophyta</taxon>
        <taxon>Spermatophyta</taxon>
        <taxon>Magnoliopsida</taxon>
        <taxon>eudicotyledons</taxon>
        <taxon>Gunneridae</taxon>
        <taxon>Pentapetalae</taxon>
        <taxon>rosids</taxon>
        <taxon>malvids</taxon>
        <taxon>Brassicales</taxon>
        <taxon>Brassicaceae</taxon>
        <taxon>Camelineae</taxon>
        <taxon>Arabidopsis</taxon>
    </lineage>
</organism>
<feature type="chain" id="PRO_0000395752" description="E3 ubiquitin-protein ligase RKP">
    <location>
        <begin position="1"/>
        <end position="1280"/>
    </location>
</feature>
<feature type="transmembrane region" description="Helical" evidence="1">
    <location>
        <begin position="551"/>
        <end position="571"/>
    </location>
</feature>
<feature type="transmembrane region" description="Helical" evidence="1">
    <location>
        <begin position="834"/>
        <end position="854"/>
    </location>
</feature>
<feature type="domain" description="B30.2/SPRY" evidence="3">
    <location>
        <begin position="82"/>
        <end position="269"/>
    </location>
</feature>
<feature type="zinc finger region" description="RING-type" evidence="2">
    <location>
        <begin position="1217"/>
        <end position="1252"/>
    </location>
</feature>
<feature type="region of interest" description="Disordered" evidence="4">
    <location>
        <begin position="669"/>
        <end position="719"/>
    </location>
</feature>
<sequence length="1280" mass="144499">MAEDSLRVGMISSGLAVLLNGEDAKENSSKARIVPHFDYSGHRPLERTIEFIFGLAEKSVGPLDGQVDSSLIRAVIKNQFSKLHGDLDVSVSQREGISVVHHGVGPPIVGLEEFSICGDIRIVKPPLVLESLALFSSARANACIWKGKWMYEVALETSGIQQLGWATLACPFTDQKGVGDADDSYAFDGRRVSKWNKEAEPYGQSWVAGDVIGCCIDLNCDEIYFYRNGVSLGAAFTGIRKLGPGFGYYPAISLSQGERCELNFGAYPFKYPVDGFQPLQEAPTRFSFATELLRCFSRLLDRPDRSLADTLSRLRRFASVEELFCPVSSAICDEFFYILEQDPLLAEYLGRGAFLSFLLETFRTQAPHDSSSLDKVLDVFLEFPQSHLIFEHVVNALACGCKTATLILTECPYSGPYPYLALACHLFKREELMVQWWRSLHFEFLFEGFLSCRSSNKHDLQHLMPVVWWPGSSEDISYESSMGFTISALSEAINKIEEKQRNLCLLVIQFIPPVSPPQLPGSAFRGFLQNLLLKNRGADRTLAPSGVTRNSVLVSLFSVILHFLSEGFAMLKSSEAVHHNVGFLHRGGQQKFPLSLFLKNDPHRADITRLGGLFSHISKSYPTDDQEEEIMRWEEGCMDDEQNRVTHATEQKPCCCLAYDTDLTKSLKDRGKNTAQSSRGRCSSIPERSSHVAAECSAGSFSEEIDDKPSTSNQSDPDFGYRPVRFMRTALQESRISSAILSEEELLDALLLLYHIAVAPNFKQASYYMSHQSQSISLLEETDKQIRERASCDQIKRLKEARNNYKEDVMDCVRHSAWFRISLFSRWKQRGMYALCMWVVQLLLVLSKMDSVFVYIPEFYLESLVDCFHVLRKSDPPFVPSTTFIKQGLSSFITFVVTHFNDSRISNTDLKDLLLQSISVLVQYKEYLEAFENNEAATRHMPAALLAAFDNRSWIPVTNIFLRLCKGSGFSSLKNGESSFSSTVFQALLRDACINDGELLSTFLNRLFNTLSWTITEFSVSVREMQEKYQVMEFQQRKCCVIFELSSNLARVLEFCTYAMPQAFLAGTDTNLRRLTELILFILNHMTSAVDDEFFDLSLRRQGQPSEKVSRGILLAPLVGIILNLLEASEDSKPKQQHDVIGLFASMDCPDTVYYGFQYLLEYNWDGCVSGDDAYVKKLGQLENFLSHLINRASSQEPERKEESFNKDTTDIEDNTCCICYAGEANAMIAPCSHRSCYGCITRHLLNCQRCFFCNATVIDVIRDKEEEEEEDDDGHKRST</sequence>
<accession>Q9SIZ8</accession>
<reference key="1">
    <citation type="journal article" date="1999" name="Nature">
        <title>Sequence and analysis of chromosome 2 of the plant Arabidopsis thaliana.</title>
        <authorList>
            <person name="Lin X."/>
            <person name="Kaul S."/>
            <person name="Rounsley S.D."/>
            <person name="Shea T.P."/>
            <person name="Benito M.-I."/>
            <person name="Town C.D."/>
            <person name="Fujii C.Y."/>
            <person name="Mason T.M."/>
            <person name="Bowman C.L."/>
            <person name="Barnstead M.E."/>
            <person name="Feldblyum T.V."/>
            <person name="Buell C.R."/>
            <person name="Ketchum K.A."/>
            <person name="Lee J.J."/>
            <person name="Ronning C.M."/>
            <person name="Koo H.L."/>
            <person name="Moffat K.S."/>
            <person name="Cronin L.A."/>
            <person name="Shen M."/>
            <person name="Pai G."/>
            <person name="Van Aken S."/>
            <person name="Umayam L."/>
            <person name="Tallon L.J."/>
            <person name="Gill J.E."/>
            <person name="Adams M.D."/>
            <person name="Carrera A.J."/>
            <person name="Creasy T.H."/>
            <person name="Goodman H.M."/>
            <person name="Somerville C.R."/>
            <person name="Copenhaver G.P."/>
            <person name="Preuss D."/>
            <person name="Nierman W.C."/>
            <person name="White O."/>
            <person name="Eisen J.A."/>
            <person name="Salzberg S.L."/>
            <person name="Fraser C.M."/>
            <person name="Venter J.C."/>
        </authorList>
    </citation>
    <scope>NUCLEOTIDE SEQUENCE [LARGE SCALE GENOMIC DNA]</scope>
    <source>
        <strain>cv. Columbia</strain>
    </source>
</reference>
<reference key="2">
    <citation type="journal article" date="2017" name="Plant J.">
        <title>Araport11: a complete reannotation of the Arabidopsis thaliana reference genome.</title>
        <authorList>
            <person name="Cheng C.Y."/>
            <person name="Krishnakumar V."/>
            <person name="Chan A.P."/>
            <person name="Thibaud-Nissen F."/>
            <person name="Schobel S."/>
            <person name="Town C.D."/>
        </authorList>
    </citation>
    <scope>GENOME REANNOTATION</scope>
    <source>
        <strain>cv. Columbia</strain>
    </source>
</reference>
<reference key="3">
    <citation type="submission" date="2006-07" db="EMBL/GenBank/DDBJ databases">
        <title>Large-scale analysis of RIKEN Arabidopsis full-length (RAFL) cDNAs.</title>
        <authorList>
            <person name="Totoki Y."/>
            <person name="Seki M."/>
            <person name="Ishida J."/>
            <person name="Nakajima M."/>
            <person name="Enju A."/>
            <person name="Kamiya A."/>
            <person name="Narusaka M."/>
            <person name="Shin-i T."/>
            <person name="Nakagawa M."/>
            <person name="Sakamoto N."/>
            <person name="Oishi K."/>
            <person name="Kohara Y."/>
            <person name="Kobayashi M."/>
            <person name="Toyoda A."/>
            <person name="Sakaki Y."/>
            <person name="Sakurai T."/>
            <person name="Iida K."/>
            <person name="Akiyama K."/>
            <person name="Satou M."/>
            <person name="Toyoda T."/>
            <person name="Konagaya A."/>
            <person name="Carninci P."/>
            <person name="Kawai J."/>
            <person name="Hayashizaki Y."/>
            <person name="Shinozaki K."/>
        </authorList>
    </citation>
    <scope>NUCLEOTIDE SEQUENCE [LARGE SCALE MRNA]</scope>
    <source>
        <strain>cv. Columbia</strain>
    </source>
</reference>
<reference key="4">
    <citation type="journal article" date="2008" name="Plant J.">
        <title>Degradation of the cyclin-dependent kinase inhibitor KRP1 is regulated by two different ubiquitin E3 ligases.</title>
        <authorList>
            <person name="Ren H."/>
            <person name="Santner A."/>
            <person name="del Pozo J.C."/>
            <person name="Murray J.A."/>
            <person name="Estelle M."/>
        </authorList>
    </citation>
    <scope>FUNCTION</scope>
    <scope>DISRUPTION PHENOTYPE</scope>
</reference>
<reference key="5">
    <citation type="journal article" date="2009" name="Plant J.">
        <title>RKP, a RING finger E3 ligase induced by BSCTV C4 protein, affects geminivirus infection by regulation of the plant cell cycle.</title>
        <authorList>
            <person name="Lai J."/>
            <person name="Chen H."/>
            <person name="Teng K."/>
            <person name="Zhao Q."/>
            <person name="Zhang Z."/>
            <person name="Li Y."/>
            <person name="Liang L."/>
            <person name="Xia R."/>
            <person name="Wu Y."/>
            <person name="Guo H."/>
            <person name="Xie Q."/>
        </authorList>
    </citation>
    <scope>FUNCTION</scope>
    <scope>INDUCTION BY BEET SEVERE CURLY TOP VIRUS C4</scope>
    <scope>DISRUPTION PHENOTYPE</scope>
</reference>
<evidence type="ECO:0000255" key="1"/>
<evidence type="ECO:0000255" key="2">
    <source>
        <dbReference type="PROSITE-ProRule" id="PRU00175"/>
    </source>
</evidence>
<evidence type="ECO:0000255" key="3">
    <source>
        <dbReference type="PROSITE-ProRule" id="PRU00548"/>
    </source>
</evidence>
<evidence type="ECO:0000256" key="4">
    <source>
        <dbReference type="SAM" id="MobiDB-lite"/>
    </source>
</evidence>
<evidence type="ECO:0000269" key="5">
    <source>
    </source>
</evidence>
<evidence type="ECO:0000269" key="6">
    <source>
    </source>
</evidence>
<evidence type="ECO:0000305" key="7"/>
<gene>
    <name type="primary">RKP</name>
    <name type="synonym">KPC1</name>
    <name type="ordered locus">At2g22010</name>
    <name type="ORF">F7D8.33</name>
</gene>
<name>RKP_ARATH</name>
<protein>
    <recommendedName>
        <fullName>E3 ubiquitin-protein ligase RKP</fullName>
        <shortName>AtKPC1</shortName>
        <ecNumber>2.3.2.27</ecNumber>
    </recommendedName>
    <alternativeName>
        <fullName>Protein RELATED TO KPC1</fullName>
    </alternativeName>
    <alternativeName>
        <fullName evidence="7">RING-type E3 ubiquitin transferase RKP</fullName>
    </alternativeName>
</protein>
<keyword id="KW-0025">Alternative splicing</keyword>
<keyword id="KW-0472">Membrane</keyword>
<keyword id="KW-0479">Metal-binding</keyword>
<keyword id="KW-1185">Reference proteome</keyword>
<keyword id="KW-0808">Transferase</keyword>
<keyword id="KW-0812">Transmembrane</keyword>
<keyword id="KW-1133">Transmembrane helix</keyword>
<keyword id="KW-0833">Ubl conjugation pathway</keyword>
<keyword id="KW-0862">Zinc</keyword>
<keyword id="KW-0863">Zinc-finger</keyword>
<dbReference type="EC" id="2.3.2.27"/>
<dbReference type="EMBL" id="AC007019">
    <property type="protein sequence ID" value="AAD20418.1"/>
    <property type="status" value="ALT_SEQ"/>
    <property type="molecule type" value="Genomic_DNA"/>
</dbReference>
<dbReference type="EMBL" id="CP002685">
    <property type="protein sequence ID" value="AEC07251.1"/>
    <property type="molecule type" value="Genomic_DNA"/>
</dbReference>
<dbReference type="EMBL" id="AK230019">
    <property type="status" value="NOT_ANNOTATED_CDS"/>
    <property type="molecule type" value="mRNA"/>
</dbReference>
<dbReference type="PIR" id="H84607">
    <property type="entry name" value="H84607"/>
</dbReference>
<dbReference type="RefSeq" id="NP_850020.1">
    <molecule id="Q9SIZ8-1"/>
    <property type="nucleotide sequence ID" value="NM_179689.3"/>
</dbReference>
<dbReference type="SMR" id="Q9SIZ8"/>
<dbReference type="BioGRID" id="2090">
    <property type="interactions" value="6"/>
</dbReference>
<dbReference type="FunCoup" id="Q9SIZ8">
    <property type="interactions" value="2061"/>
</dbReference>
<dbReference type="STRING" id="3702.Q9SIZ8"/>
<dbReference type="iPTMnet" id="Q9SIZ8"/>
<dbReference type="PaxDb" id="3702-AT2G22010.2"/>
<dbReference type="ProteomicsDB" id="234814">
    <molecule id="Q9SIZ8-1"/>
</dbReference>
<dbReference type="EnsemblPlants" id="AT2G22010.1">
    <molecule id="Q9SIZ8-1"/>
    <property type="protein sequence ID" value="AT2G22010.1"/>
    <property type="gene ID" value="AT2G22010"/>
</dbReference>
<dbReference type="GeneID" id="816737"/>
<dbReference type="Gramene" id="AT2G22010.1">
    <molecule id="Q9SIZ8-1"/>
    <property type="protein sequence ID" value="AT2G22010.1"/>
    <property type="gene ID" value="AT2G22010"/>
</dbReference>
<dbReference type="KEGG" id="ath:AT2G22010"/>
<dbReference type="Araport" id="AT2G22010"/>
<dbReference type="TAIR" id="AT2G22010">
    <property type="gene designation" value="RKP"/>
</dbReference>
<dbReference type="eggNOG" id="KOG2242">
    <property type="taxonomic scope" value="Eukaryota"/>
</dbReference>
<dbReference type="eggNOG" id="KOG4692">
    <property type="taxonomic scope" value="Eukaryota"/>
</dbReference>
<dbReference type="InParanoid" id="Q9SIZ8"/>
<dbReference type="OrthoDB" id="258495at2759"/>
<dbReference type="PRO" id="PR:Q9SIZ8"/>
<dbReference type="Proteomes" id="UP000006548">
    <property type="component" value="Chromosome 2"/>
</dbReference>
<dbReference type="ExpressionAtlas" id="Q9SIZ8">
    <property type="expression patterns" value="baseline and differential"/>
</dbReference>
<dbReference type="GO" id="GO:0016020">
    <property type="term" value="C:membrane"/>
    <property type="evidence" value="ECO:0007669"/>
    <property type="project" value="UniProtKB-SubCell"/>
</dbReference>
<dbReference type="GO" id="GO:0000151">
    <property type="term" value="C:ubiquitin ligase complex"/>
    <property type="evidence" value="ECO:0007669"/>
    <property type="project" value="InterPro"/>
</dbReference>
<dbReference type="GO" id="GO:0061630">
    <property type="term" value="F:ubiquitin protein ligase activity"/>
    <property type="evidence" value="ECO:0000314"/>
    <property type="project" value="UniProtKB"/>
</dbReference>
<dbReference type="GO" id="GO:0034450">
    <property type="term" value="F:ubiquitin-ubiquitin ligase activity"/>
    <property type="evidence" value="ECO:0007669"/>
    <property type="project" value="InterPro"/>
</dbReference>
<dbReference type="GO" id="GO:0008270">
    <property type="term" value="F:zinc ion binding"/>
    <property type="evidence" value="ECO:0007669"/>
    <property type="project" value="UniProtKB-KW"/>
</dbReference>
<dbReference type="GO" id="GO:2000060">
    <property type="term" value="P:positive regulation of ubiquitin-dependent protein catabolic process"/>
    <property type="evidence" value="ECO:0000314"/>
    <property type="project" value="UniProtKB"/>
</dbReference>
<dbReference type="GO" id="GO:0030163">
    <property type="term" value="P:protein catabolic process"/>
    <property type="evidence" value="ECO:0000315"/>
    <property type="project" value="UniProtKB"/>
</dbReference>
<dbReference type="GO" id="GO:0016567">
    <property type="term" value="P:protein ubiquitination"/>
    <property type="evidence" value="ECO:0000314"/>
    <property type="project" value="UniProtKB"/>
</dbReference>
<dbReference type="GO" id="GO:0006511">
    <property type="term" value="P:ubiquitin-dependent protein catabolic process"/>
    <property type="evidence" value="ECO:0007669"/>
    <property type="project" value="InterPro"/>
</dbReference>
<dbReference type="CDD" id="cd16541">
    <property type="entry name" value="RING-HC_RNF123"/>
    <property type="match status" value="1"/>
</dbReference>
<dbReference type="CDD" id="cd12882">
    <property type="entry name" value="SPRY_RNF123"/>
    <property type="match status" value="1"/>
</dbReference>
<dbReference type="FunFam" id="2.60.120.920:FF:000053">
    <property type="entry name" value="E3 ubiquitin-protein ligase RKP"/>
    <property type="match status" value="1"/>
</dbReference>
<dbReference type="FunFam" id="3.30.40.10:FF:000133">
    <property type="entry name" value="E3 ubiquitin-protein ligase RNF123"/>
    <property type="match status" value="1"/>
</dbReference>
<dbReference type="Gene3D" id="2.60.120.920">
    <property type="match status" value="1"/>
</dbReference>
<dbReference type="Gene3D" id="3.30.40.10">
    <property type="entry name" value="Zinc/RING finger domain, C3HC4 (zinc finger)"/>
    <property type="match status" value="1"/>
</dbReference>
<dbReference type="InterPro" id="IPR001870">
    <property type="entry name" value="B30.2/SPRY"/>
</dbReference>
<dbReference type="InterPro" id="IPR043136">
    <property type="entry name" value="B30.2/SPRY_sf"/>
</dbReference>
<dbReference type="InterPro" id="IPR013320">
    <property type="entry name" value="ConA-like_dom_sf"/>
</dbReference>
<dbReference type="InterPro" id="IPR045737">
    <property type="entry name" value="RKP_N"/>
</dbReference>
<dbReference type="InterPro" id="IPR045129">
    <property type="entry name" value="RNF123/RSPRY1-like"/>
</dbReference>
<dbReference type="InterPro" id="IPR003877">
    <property type="entry name" value="SPRY_dom"/>
</dbReference>
<dbReference type="InterPro" id="IPR035773">
    <property type="entry name" value="SPRY_RNF123"/>
</dbReference>
<dbReference type="InterPro" id="IPR019474">
    <property type="entry name" value="Ub_conjug_fac_E4_core"/>
</dbReference>
<dbReference type="InterPro" id="IPR001841">
    <property type="entry name" value="Znf_RING"/>
</dbReference>
<dbReference type="InterPro" id="IPR013083">
    <property type="entry name" value="Znf_RING/FYVE/PHD"/>
</dbReference>
<dbReference type="PANTHER" id="PTHR13363:SF5">
    <property type="entry name" value="E3 UBIQUITIN-PROTEIN LIGASE RNF123"/>
    <property type="match status" value="1"/>
</dbReference>
<dbReference type="PANTHER" id="PTHR13363">
    <property type="entry name" value="RING FINGER AND SRY DOMAIN-CONTAINING"/>
    <property type="match status" value="1"/>
</dbReference>
<dbReference type="Pfam" id="PF19322">
    <property type="entry name" value="RKP_N"/>
    <property type="match status" value="1"/>
</dbReference>
<dbReference type="Pfam" id="PF00622">
    <property type="entry name" value="SPRY"/>
    <property type="match status" value="1"/>
</dbReference>
<dbReference type="Pfam" id="PF10408">
    <property type="entry name" value="Ufd2P_core"/>
    <property type="match status" value="1"/>
</dbReference>
<dbReference type="Pfam" id="PF13920">
    <property type="entry name" value="zf-C3HC4_3"/>
    <property type="match status" value="1"/>
</dbReference>
<dbReference type="SMART" id="SM00449">
    <property type="entry name" value="SPRY"/>
    <property type="match status" value="1"/>
</dbReference>
<dbReference type="SUPFAM" id="SSF49899">
    <property type="entry name" value="Concanavalin A-like lectins/glucanases"/>
    <property type="match status" value="1"/>
</dbReference>
<dbReference type="SUPFAM" id="SSF57850">
    <property type="entry name" value="RING/U-box"/>
    <property type="match status" value="1"/>
</dbReference>
<dbReference type="PROSITE" id="PS50188">
    <property type="entry name" value="B302_SPRY"/>
    <property type="match status" value="1"/>
</dbReference>
<dbReference type="PROSITE" id="PS50089">
    <property type="entry name" value="ZF_RING_2"/>
    <property type="match status" value="1"/>
</dbReference>